<name>TXC2B_CUPSA</name>
<protein>
    <recommendedName>
        <fullName evidence="2">Cupiennin-2b</fullName>
        <shortName evidence="2">Cu-2b</shortName>
    </recommendedName>
</protein>
<sequence length="35" mass="3730">AFGTILKALAKIAAKVVKKLATKPGATYMLKQNLQ</sequence>
<dbReference type="GO" id="GO:0005576">
    <property type="term" value="C:extracellular region"/>
    <property type="evidence" value="ECO:0007669"/>
    <property type="project" value="UniProtKB-SubCell"/>
</dbReference>
<dbReference type="GO" id="GO:0090729">
    <property type="term" value="F:toxin activity"/>
    <property type="evidence" value="ECO:0007669"/>
    <property type="project" value="UniProtKB-KW"/>
</dbReference>
<proteinExistence type="evidence at protein level"/>
<keyword id="KW-0027">Amidation</keyword>
<keyword id="KW-0903">Direct protein sequencing</keyword>
<keyword id="KW-0964">Secreted</keyword>
<keyword id="KW-0800">Toxin</keyword>
<evidence type="ECO:0000269" key="1">
    <source>
    </source>
</evidence>
<evidence type="ECO:0000303" key="2">
    <source>
    </source>
</evidence>
<evidence type="ECO:0000305" key="3"/>
<evidence type="ECO:0000305" key="4">
    <source>
    </source>
</evidence>
<comment type="subcellular location">
    <subcellularLocation>
        <location evidence="1">Secreted</location>
    </subcellularLocation>
</comment>
<comment type="tissue specificity">
    <text evidence="4">Expressed by the venom gland.</text>
</comment>
<comment type="mass spectrometry" mass="3726.255" method="Electrospray" evidence="1"/>
<comment type="similarity">
    <text evidence="3">Belongs to the cationic peptide 04 (cupiennin) family. 02 subfamily.</text>
</comment>
<organism>
    <name type="scientific">Cupiennius salei</name>
    <name type="common">American wandering spider</name>
    <dbReference type="NCBI Taxonomy" id="6928"/>
    <lineage>
        <taxon>Eukaryota</taxon>
        <taxon>Metazoa</taxon>
        <taxon>Ecdysozoa</taxon>
        <taxon>Arthropoda</taxon>
        <taxon>Chelicerata</taxon>
        <taxon>Arachnida</taxon>
        <taxon>Araneae</taxon>
        <taxon>Araneomorphae</taxon>
        <taxon>Entelegynae</taxon>
        <taxon>Lycosoidea</taxon>
        <taxon>Ctenidae</taxon>
        <taxon>Cupiennius</taxon>
    </lineage>
</organism>
<reference key="1">
    <citation type="journal article" date="2012" name="FEBS J.">
        <title>Multicomponent venom of the spider Cupiennius salei: a bioanalytical investigation applying different strategies.</title>
        <authorList>
            <person name="Trachsel C."/>
            <person name="Siegemund D."/>
            <person name="Kampfer U."/>
            <person name="Kopp L.S."/>
            <person name="Buhr C."/>
            <person name="Grossmann J."/>
            <person name="Luthi C."/>
            <person name="Cunningham M."/>
            <person name="Nentwig W."/>
            <person name="Kuhn-Nentwig L."/>
            <person name="Schurch S."/>
            <person name="Schaller J."/>
        </authorList>
    </citation>
    <scope>PROTEIN SEQUENCE</scope>
    <scope>MASS SPECTROMETRY</scope>
    <scope>AMIDATION AT GLN-35</scope>
    <source>
        <tissue>Venom</tissue>
    </source>
</reference>
<feature type="peptide" id="PRO_0000421194" description="Cupiennin-2b" evidence="1">
    <location>
        <begin position="1"/>
        <end position="35"/>
    </location>
</feature>
<feature type="modified residue" description="Glutamine amide" evidence="1">
    <location>
        <position position="35"/>
    </location>
</feature>
<accession>B3EWT7</accession>